<accession>A0A3G3C7S2</accession>
<name>CT11_CONAA</name>
<sequence>MSCLPVFVILLLLTASGPSVDARLKTKDDVPLSSFRDNAKSTLRRLQDKSACCGYKLCSPCGQA</sequence>
<proteinExistence type="evidence at protein level"/>
<keyword id="KW-0903">Direct protein sequencing</keyword>
<keyword id="KW-1015">Disulfide bond</keyword>
<keyword id="KW-0379">Hydroxylation</keyword>
<keyword id="KW-0872">Ion channel impairing toxin</keyword>
<keyword id="KW-0964">Secreted</keyword>
<keyword id="KW-0732">Signal</keyword>
<keyword id="KW-0800">Toxin</keyword>
<feature type="signal peptide" evidence="1">
    <location>
        <begin position="1"/>
        <end position="22"/>
    </location>
</feature>
<feature type="propeptide" id="PRO_0000453594" evidence="4">
    <location>
        <begin position="23"/>
        <end position="49"/>
    </location>
</feature>
<feature type="peptide" id="PRO_5028504155" description="Conotoxin Am1.1" evidence="2">
    <location>
        <begin position="50"/>
        <end position="64"/>
    </location>
</feature>
<feature type="modified residue" description="4-hydroxyproline; partial; in major form" evidence="2">
    <location>
        <position position="60"/>
    </location>
</feature>
<dbReference type="EMBL" id="MH282813">
    <property type="protein sequence ID" value="AYP73020.1"/>
    <property type="molecule type" value="mRNA"/>
</dbReference>
<dbReference type="GO" id="GO:0005576">
    <property type="term" value="C:extracellular region"/>
    <property type="evidence" value="ECO:0007669"/>
    <property type="project" value="UniProtKB-SubCell"/>
</dbReference>
<dbReference type="GO" id="GO:0099106">
    <property type="term" value="F:ion channel regulator activity"/>
    <property type="evidence" value="ECO:0007669"/>
    <property type="project" value="UniProtKB-KW"/>
</dbReference>
<dbReference type="GO" id="GO:0090729">
    <property type="term" value="F:toxin activity"/>
    <property type="evidence" value="ECO:0007669"/>
    <property type="project" value="UniProtKB-KW"/>
</dbReference>
<dbReference type="InterPro" id="IPR031565">
    <property type="entry name" value="T-conotoxin"/>
</dbReference>
<dbReference type="Pfam" id="PF16981">
    <property type="entry name" value="Chi-conotoxin"/>
    <property type="match status" value="1"/>
</dbReference>
<evidence type="ECO:0000255" key="1"/>
<evidence type="ECO:0000269" key="2">
    <source>
    </source>
</evidence>
<evidence type="ECO:0000305" key="3"/>
<evidence type="ECO:0000305" key="4">
    <source>
    </source>
</evidence>
<protein>
    <recommendedName>
        <fullName evidence="3">Conotoxin Am1.1</fullName>
    </recommendedName>
</protein>
<organism>
    <name type="scientific">Conus amadis</name>
    <name type="common">Amadis cone</name>
    <dbReference type="NCBI Taxonomy" id="198732"/>
    <lineage>
        <taxon>Eukaryota</taxon>
        <taxon>Metazoa</taxon>
        <taxon>Spiralia</taxon>
        <taxon>Lophotrochozoa</taxon>
        <taxon>Mollusca</taxon>
        <taxon>Gastropoda</taxon>
        <taxon>Caenogastropoda</taxon>
        <taxon>Neogastropoda</taxon>
        <taxon>Conoidea</taxon>
        <taxon>Conidae</taxon>
        <taxon>Conus</taxon>
        <taxon>Leptoconus</taxon>
    </lineage>
</organism>
<reference key="1">
    <citation type="journal article" date="2019" name="J. Proteomics">
        <title>Cone snail prolyl-4-hydroxylase alpha-subunit sequences derived from transcriptomic data and mass spectrometric analysis of variable proline hydroxylation in C. amadis venom.</title>
        <authorList>
            <person name="Vijayasarathy M."/>
            <person name="Balaram P."/>
        </authorList>
    </citation>
    <scope>NUCLEOTIDE SEQUENCE [MRNA]</scope>
    <scope>PROTEIN SEQUENCE OF 50-64</scope>
    <scope>SUBCELLULAR LOCATION</scope>
    <scope>IDENTIFICATION BY MASS SPECTROMETRY</scope>
    <scope>HYDROXYLATION AT PRO-60</scope>
    <source>
        <tissue>Venom</tissue>
        <tissue>Venom duct</tissue>
    </source>
</reference>
<comment type="function">
    <text evidence="3">Probable toxin that inhibits ion channels.</text>
</comment>
<comment type="subcellular location">
    <subcellularLocation>
        <location evidence="2">Secreted</location>
    </subcellularLocation>
</comment>
<comment type="tissue specificity">
    <text evidence="4">Expressed by the venom duct.</text>
</comment>
<comment type="domain">
    <text evidence="3">The cysteine framework is I (CC-C-C). Alpha4/2 pattern.</text>
</comment>
<comment type="PTM">
    <text evidence="3">Contains 2 disulfide bonds.</text>
</comment>
<comment type="similarity">
    <text evidence="3">Belongs to the conotoxin T superfamily.</text>
</comment>